<protein>
    <recommendedName>
        <fullName>Putative poly(A) polymerase catalytic subunit</fullName>
        <ecNumber>2.7.7.19</ecNumber>
    </recommendedName>
</protein>
<feature type="chain" id="PRO_0000253421" description="Putative poly(A) polymerase catalytic subunit">
    <location>
        <begin position="1"/>
        <end position="584"/>
    </location>
</feature>
<feature type="region of interest" description="Disordered" evidence="1">
    <location>
        <begin position="522"/>
        <end position="584"/>
    </location>
</feature>
<feature type="compositionally biased region" description="Basic and acidic residues" evidence="1">
    <location>
        <begin position="522"/>
        <end position="531"/>
    </location>
</feature>
<feature type="compositionally biased region" description="Low complexity" evidence="1">
    <location>
        <begin position="546"/>
        <end position="569"/>
    </location>
</feature>
<feature type="helix" evidence="4">
    <location>
        <begin position="19"/>
        <end position="41"/>
    </location>
</feature>
<feature type="strand" evidence="4">
    <location>
        <begin position="42"/>
        <end position="44"/>
    </location>
</feature>
<feature type="helix" evidence="4">
    <location>
        <begin position="46"/>
        <end position="63"/>
    </location>
</feature>
<feature type="strand" evidence="4">
    <location>
        <begin position="66"/>
        <end position="68"/>
    </location>
</feature>
<feature type="helix" evidence="4">
    <location>
        <begin position="69"/>
        <end position="80"/>
    </location>
</feature>
<feature type="helix" evidence="4">
    <location>
        <begin position="82"/>
        <end position="84"/>
    </location>
</feature>
<feature type="strand" evidence="4">
    <location>
        <begin position="95"/>
        <end position="101"/>
    </location>
</feature>
<feature type="helix" evidence="4">
    <location>
        <begin position="102"/>
        <end position="115"/>
    </location>
</feature>
<feature type="strand" evidence="4">
    <location>
        <begin position="122"/>
        <end position="125"/>
    </location>
</feature>
<feature type="strand" evidence="4">
    <location>
        <begin position="131"/>
        <end position="138"/>
    </location>
</feature>
<feature type="strand" evidence="4">
    <location>
        <begin position="140"/>
        <end position="146"/>
    </location>
</feature>
<feature type="helix" evidence="4">
    <location>
        <begin position="149"/>
        <end position="154"/>
    </location>
</feature>
<feature type="strand" evidence="4">
    <location>
        <begin position="157"/>
        <end position="160"/>
    </location>
</feature>
<feature type="strand" evidence="4">
    <location>
        <begin position="163"/>
        <end position="166"/>
    </location>
</feature>
<feature type="helix" evidence="4">
    <location>
        <begin position="168"/>
        <end position="179"/>
    </location>
</feature>
<feature type="helix" evidence="4">
    <location>
        <begin position="182"/>
        <end position="203"/>
    </location>
</feature>
<feature type="helix" evidence="4">
    <location>
        <begin position="220"/>
        <end position="231"/>
    </location>
</feature>
<feature type="turn" evidence="4">
    <location>
        <begin position="232"/>
        <end position="235"/>
    </location>
</feature>
<feature type="turn" evidence="4">
    <location>
        <begin position="237"/>
        <end position="239"/>
    </location>
</feature>
<feature type="strand" evidence="4">
    <location>
        <begin position="243"/>
        <end position="246"/>
    </location>
</feature>
<feature type="helix" evidence="4">
    <location>
        <begin position="247"/>
        <end position="257"/>
    </location>
</feature>
<feature type="turn" evidence="4">
    <location>
        <begin position="277"/>
        <end position="280"/>
    </location>
</feature>
<feature type="strand" evidence="4">
    <location>
        <begin position="286"/>
        <end position="291"/>
    </location>
</feature>
<feature type="helix" evidence="4">
    <location>
        <begin position="294"/>
        <end position="308"/>
    </location>
</feature>
<feature type="strand" evidence="4">
    <location>
        <begin position="309"/>
        <end position="311"/>
    </location>
</feature>
<feature type="helix" evidence="4">
    <location>
        <begin position="312"/>
        <end position="314"/>
    </location>
</feature>
<feature type="strand" evidence="4">
    <location>
        <begin position="315"/>
        <end position="320"/>
    </location>
</feature>
<feature type="turn" evidence="4">
    <location>
        <begin position="324"/>
        <end position="326"/>
    </location>
</feature>
<feature type="strand" evidence="4">
    <location>
        <begin position="330"/>
        <end position="337"/>
    </location>
</feature>
<feature type="strand" evidence="4">
    <location>
        <begin position="339"/>
        <end position="345"/>
    </location>
</feature>
<feature type="strand" evidence="4">
    <location>
        <begin position="351"/>
        <end position="354"/>
    </location>
</feature>
<feature type="helix" evidence="4">
    <location>
        <begin position="377"/>
        <end position="393"/>
    </location>
</feature>
<feature type="helix" evidence="4">
    <location>
        <begin position="397"/>
        <end position="421"/>
    </location>
</feature>
<feature type="strand" evidence="4">
    <location>
        <begin position="427"/>
        <end position="429"/>
    </location>
</feature>
<feature type="strand" evidence="4">
    <location>
        <begin position="438"/>
        <end position="440"/>
    </location>
</feature>
<feature type="helix" evidence="4">
    <location>
        <begin position="445"/>
        <end position="459"/>
    </location>
</feature>
<feature type="helix" evidence="4">
    <location>
        <begin position="469"/>
        <end position="472"/>
    </location>
</feature>
<feature type="helix" evidence="4">
    <location>
        <begin position="477"/>
        <end position="482"/>
    </location>
</feature>
<feature type="helix" evidence="4">
    <location>
        <begin position="501"/>
        <end position="503"/>
    </location>
</feature>
<feature type="strand" evidence="4">
    <location>
        <begin position="505"/>
        <end position="508"/>
    </location>
</feature>
<feature type="strand" evidence="4">
    <location>
        <begin position="514"/>
        <end position="516"/>
    </location>
</feature>
<feature type="strand" evidence="4">
    <location>
        <begin position="524"/>
        <end position="526"/>
    </location>
</feature>
<gene>
    <name type="ordered locus">MIMI_R341</name>
</gene>
<keyword id="KW-0002">3D-structure</keyword>
<keyword id="KW-0067">ATP-binding</keyword>
<keyword id="KW-0507">mRNA processing</keyword>
<keyword id="KW-0547">Nucleotide-binding</keyword>
<keyword id="KW-1185">Reference proteome</keyword>
<keyword id="KW-0804">Transcription</keyword>
<keyword id="KW-0808">Transferase</keyword>
<keyword id="KW-0946">Virion</keyword>
<evidence type="ECO:0000256" key="1">
    <source>
        <dbReference type="SAM" id="MobiDB-lite"/>
    </source>
</evidence>
<evidence type="ECO:0000269" key="2">
    <source>
    </source>
</evidence>
<evidence type="ECO:0000305" key="3"/>
<evidence type="ECO:0007829" key="4">
    <source>
        <dbReference type="PDB" id="4WSE"/>
    </source>
</evidence>
<proteinExistence type="evidence at protein level"/>
<reference key="1">
    <citation type="journal article" date="2004" name="Science">
        <title>The 1.2-megabase genome sequence of Mimivirus.</title>
        <authorList>
            <person name="Raoult D."/>
            <person name="Audic S."/>
            <person name="Robert C."/>
            <person name="Abergel C."/>
            <person name="Renesto P."/>
            <person name="Ogata H."/>
            <person name="La Scola B."/>
            <person name="Susan M."/>
            <person name="Claverie J.-M."/>
        </authorList>
    </citation>
    <scope>NUCLEOTIDE SEQUENCE [LARGE SCALE GENOMIC DNA]</scope>
    <source>
        <strain>Rowbotham-Bradford</strain>
    </source>
</reference>
<reference key="2">
    <citation type="unpublished observations" date="2007-09">
        <authorList>
            <person name="Abergel C."/>
        </authorList>
    </citation>
    <scope>SIMILARITY</scope>
</reference>
<reference key="3">
    <citation type="journal article" date="2006" name="J. Virol.">
        <title>Mimivirus giant particles incorporate a large fraction of anonymous and unique gene products.</title>
        <authorList>
            <person name="Renesto P."/>
            <person name="Abergel C."/>
            <person name="Decloquement P."/>
            <person name="Moinier D."/>
            <person name="Azza S."/>
            <person name="Ogata H."/>
            <person name="Fourquet P."/>
            <person name="Gorvel J.-P."/>
            <person name="Claverie J.-M."/>
            <person name="Raoult D."/>
        </authorList>
    </citation>
    <scope>IDENTIFICATION BY MASS SPECTROMETRY [LARGE SCALE ANALYSIS]</scope>
    <scope>SUBCELLULAR LOCATION</scope>
</reference>
<accession>Q5UQS6</accession>
<organismHost>
    <name type="scientific">Acanthamoeba polyphaga</name>
    <name type="common">Amoeba</name>
    <dbReference type="NCBI Taxonomy" id="5757"/>
</organismHost>
<organism>
    <name type="scientific">Acanthamoeba polyphaga mimivirus</name>
    <name type="common">APMV</name>
    <dbReference type="NCBI Taxonomy" id="212035"/>
    <lineage>
        <taxon>Viruses</taxon>
        <taxon>Varidnaviria</taxon>
        <taxon>Bamfordvirae</taxon>
        <taxon>Nucleocytoviricota</taxon>
        <taxon>Megaviricetes</taxon>
        <taxon>Imitervirales</taxon>
        <taxon>Mimiviridae</taxon>
        <taxon>Megamimivirinae</taxon>
        <taxon>Mimivirus</taxon>
        <taxon>Mimivirus bradfordmassiliense</taxon>
    </lineage>
</organism>
<comment type="function">
    <text evidence="3">Polymerase that creates the 3'-poly(A) tail of mRNA's.</text>
</comment>
<comment type="catalytic activity">
    <reaction>
        <text>RNA(n) + ATP = RNA(n)-3'-adenine ribonucleotide + diphosphate</text>
        <dbReference type="Rhea" id="RHEA:11332"/>
        <dbReference type="Rhea" id="RHEA-COMP:14527"/>
        <dbReference type="Rhea" id="RHEA-COMP:17347"/>
        <dbReference type="ChEBI" id="CHEBI:30616"/>
        <dbReference type="ChEBI" id="CHEBI:33019"/>
        <dbReference type="ChEBI" id="CHEBI:140395"/>
        <dbReference type="ChEBI" id="CHEBI:173115"/>
        <dbReference type="EC" id="2.7.7.19"/>
    </reaction>
</comment>
<comment type="subcellular location">
    <subcellularLocation>
        <location evidence="2">Virion</location>
    </subcellularLocation>
</comment>
<comment type="similarity">
    <text evidence="3">Belongs to the poxviridae poly(A) polymerase catalytic subunit family. Highly divergent.</text>
</comment>
<name>PAP1_MIMIV</name>
<dbReference type="EC" id="2.7.7.19"/>
<dbReference type="EMBL" id="AY653733">
    <property type="protein sequence ID" value="AAV50610.1"/>
    <property type="molecule type" value="Genomic_DNA"/>
</dbReference>
<dbReference type="PDB" id="4WSE">
    <property type="method" value="X-ray"/>
    <property type="resolution" value="2.84 A"/>
    <property type="chains" value="A/B=1-584"/>
</dbReference>
<dbReference type="PDBsum" id="4WSE"/>
<dbReference type="SMR" id="Q5UQS6"/>
<dbReference type="KEGG" id="vg:9924958"/>
<dbReference type="OrthoDB" id="3863at10239"/>
<dbReference type="EvolutionaryTrace" id="Q5UQS6"/>
<dbReference type="Proteomes" id="UP000001134">
    <property type="component" value="Genome"/>
</dbReference>
<dbReference type="GO" id="GO:0044423">
    <property type="term" value="C:virion component"/>
    <property type="evidence" value="ECO:0007669"/>
    <property type="project" value="UniProtKB-KW"/>
</dbReference>
<dbReference type="GO" id="GO:0005524">
    <property type="term" value="F:ATP binding"/>
    <property type="evidence" value="ECO:0007669"/>
    <property type="project" value="UniProtKB-KW"/>
</dbReference>
<dbReference type="GO" id="GO:1990817">
    <property type="term" value="F:poly(A) RNA polymerase activity"/>
    <property type="evidence" value="ECO:0007669"/>
    <property type="project" value="UniProtKB-EC"/>
</dbReference>
<dbReference type="GO" id="GO:0006397">
    <property type="term" value="P:mRNA processing"/>
    <property type="evidence" value="ECO:0007669"/>
    <property type="project" value="UniProtKB-KW"/>
</dbReference>
<dbReference type="CDD" id="cd20920">
    <property type="entry name" value="polyA_pol_Mimi"/>
    <property type="match status" value="1"/>
</dbReference>
<dbReference type="InterPro" id="IPR049463">
    <property type="entry name" value="APMV_polyA_pol_cat_2nd"/>
</dbReference>
<dbReference type="InterPro" id="IPR045355">
    <property type="entry name" value="PolyA_pol_cat_su"/>
</dbReference>
<dbReference type="Pfam" id="PF21649">
    <property type="entry name" value="APMV_polyA_pol_cat_2nd"/>
    <property type="match status" value="1"/>
</dbReference>
<dbReference type="Pfam" id="PF19244">
    <property type="entry name" value="Poly_A_pol_cat"/>
    <property type="match status" value="1"/>
</dbReference>
<sequence length="584" mass="68247">MLKNKTRAEKYQTYYTTNEYQIVKEKLPDIIRDAEIKASEVLEPTIYEKRAIMEVIKDFIRDHQRKVYGGTALNEALKQVNPKDAIYDNYSFSDIEFYSPTPVQDLVDLCNILYRKGYKFVQGKDAQHEETYSIFVNFQLYCDITYSPTRVFYGIKTIEIDGINYTDPHFMLIDYLRMVNQPLTAAGQRWEKAFERMYRLLKDYPIEDFDKRLDIPEPPEEIQSYISRIKTEFLSDNKLNESFLISGIEAYNFYIRHAASSKDEEQMARTNRNVVNLNNFIANVPFSELISVNYREDVKNTYNFLRMIVEDKEKISVDEYFPLFQFTGYSTVIKYDDHPIIRIYEGDGYCIPNVKTVKTVENDNGTKTKYEYKYVSFQYVLMILYINKFRAHLDKNKPMYFNYGIAISNLVKARNIYLDQTGKSVLDNTVFKEFRTNCTGNTISFTRMNRLRLLEKRKQGKQTSFVYTPEDFFKKDLETQAKLDPSKARFKNTSGNKIMVPKYLLFKIDNNGNIEDNIHSEEAEISEKEETSGGSSISTDKSFEESPNSSPNSSPNNSLNNSIDISTNNYDDRSENSLDSLTSD</sequence>